<comment type="function">
    <text evidence="1">NDH-1 shuttles electrons from NADH, via FMN and iron-sulfur (Fe-S) centers, to quinones in the respiratory chain. The immediate electron acceptor for the enzyme in this species is believed to be ubiquinone. Couples the redox reaction to proton translocation (for every two electrons transferred, four hydrogen ions are translocated across the cytoplasmic membrane), and thus conserves the redox energy in a proton gradient.</text>
</comment>
<comment type="catalytic activity">
    <reaction evidence="1">
        <text>a quinone + NADH + 5 H(+)(in) = a quinol + NAD(+) + 4 H(+)(out)</text>
        <dbReference type="Rhea" id="RHEA:57888"/>
        <dbReference type="ChEBI" id="CHEBI:15378"/>
        <dbReference type="ChEBI" id="CHEBI:24646"/>
        <dbReference type="ChEBI" id="CHEBI:57540"/>
        <dbReference type="ChEBI" id="CHEBI:57945"/>
        <dbReference type="ChEBI" id="CHEBI:132124"/>
    </reaction>
</comment>
<comment type="subunit">
    <text evidence="1">NDH-1 is composed of 14 different subunits. Subunits NuoB, C, D, E, F, and G constitute the peripheral sector of the complex.</text>
</comment>
<comment type="subcellular location">
    <subcellularLocation>
        <location evidence="1">Cell inner membrane</location>
        <topology evidence="1">Peripheral membrane protein</topology>
        <orientation evidence="1">Cytoplasmic side</orientation>
    </subcellularLocation>
</comment>
<comment type="similarity">
    <text evidence="1">Belongs to the complex I 30 kDa subunit family.</text>
</comment>
<feature type="chain" id="PRO_0000358215" description="NADH-quinone oxidoreductase subunit C">
    <location>
        <begin position="1"/>
        <end position="207"/>
    </location>
</feature>
<evidence type="ECO:0000255" key="1">
    <source>
        <dbReference type="HAMAP-Rule" id="MF_01357"/>
    </source>
</evidence>
<reference key="1">
    <citation type="journal article" date="2004" name="Nat. Biotechnol.">
        <title>The genome sequence of the extreme thermophile Thermus thermophilus.</title>
        <authorList>
            <person name="Henne A."/>
            <person name="Brueggemann H."/>
            <person name="Raasch C."/>
            <person name="Wiezer A."/>
            <person name="Hartsch T."/>
            <person name="Liesegang H."/>
            <person name="Johann A."/>
            <person name="Lienard T."/>
            <person name="Gohl O."/>
            <person name="Martinez-Arias R."/>
            <person name="Jacobi C."/>
            <person name="Starkuviene V."/>
            <person name="Schlenczeck S."/>
            <person name="Dencker S."/>
            <person name="Huber R."/>
            <person name="Klenk H.-P."/>
            <person name="Kramer W."/>
            <person name="Merkl R."/>
            <person name="Gottschalk G."/>
            <person name="Fritz H.-J."/>
        </authorList>
    </citation>
    <scope>NUCLEOTIDE SEQUENCE [LARGE SCALE GENOMIC DNA]</scope>
    <source>
        <strain>ATCC BAA-163 / DSM 7039 / HB27</strain>
    </source>
</reference>
<dbReference type="EC" id="7.1.1.-" evidence="1"/>
<dbReference type="EMBL" id="AE017221">
    <property type="protein sequence ID" value="AAS82260.1"/>
    <property type="molecule type" value="Genomic_DNA"/>
</dbReference>
<dbReference type="RefSeq" id="WP_011174270.1">
    <property type="nucleotide sequence ID" value="NC_005835.1"/>
</dbReference>
<dbReference type="SMR" id="Q72GD0"/>
<dbReference type="GeneID" id="3168317"/>
<dbReference type="KEGG" id="tth:TT_C1918"/>
<dbReference type="eggNOG" id="COG0852">
    <property type="taxonomic scope" value="Bacteria"/>
</dbReference>
<dbReference type="HOGENOM" id="CLU_042628_5_0_0"/>
<dbReference type="OrthoDB" id="9803286at2"/>
<dbReference type="Proteomes" id="UP000000592">
    <property type="component" value="Chromosome"/>
</dbReference>
<dbReference type="GO" id="GO:0005886">
    <property type="term" value="C:plasma membrane"/>
    <property type="evidence" value="ECO:0007669"/>
    <property type="project" value="UniProtKB-SubCell"/>
</dbReference>
<dbReference type="GO" id="GO:0008137">
    <property type="term" value="F:NADH dehydrogenase (ubiquinone) activity"/>
    <property type="evidence" value="ECO:0007669"/>
    <property type="project" value="InterPro"/>
</dbReference>
<dbReference type="GO" id="GO:0050136">
    <property type="term" value="F:NADH:ubiquinone reductase (non-electrogenic) activity"/>
    <property type="evidence" value="ECO:0007669"/>
    <property type="project" value="UniProtKB-UniRule"/>
</dbReference>
<dbReference type="GO" id="GO:0048038">
    <property type="term" value="F:quinone binding"/>
    <property type="evidence" value="ECO:0007669"/>
    <property type="project" value="UniProtKB-KW"/>
</dbReference>
<dbReference type="Gene3D" id="3.30.460.80">
    <property type="entry name" value="NADH:ubiquinone oxidoreductase, 30kDa subunit"/>
    <property type="match status" value="1"/>
</dbReference>
<dbReference type="HAMAP" id="MF_01357">
    <property type="entry name" value="NDH1_NuoC"/>
    <property type="match status" value="1"/>
</dbReference>
<dbReference type="InterPro" id="IPR010218">
    <property type="entry name" value="NADH_DH_suC"/>
</dbReference>
<dbReference type="InterPro" id="IPR037232">
    <property type="entry name" value="NADH_quin_OxRdtase_su_C/D-like"/>
</dbReference>
<dbReference type="InterPro" id="IPR001268">
    <property type="entry name" value="NADH_UbQ_OxRdtase_30kDa_su"/>
</dbReference>
<dbReference type="InterPro" id="IPR020396">
    <property type="entry name" value="NADH_UbQ_OxRdtase_CS"/>
</dbReference>
<dbReference type="PANTHER" id="PTHR10884:SF14">
    <property type="entry name" value="NADH DEHYDROGENASE [UBIQUINONE] IRON-SULFUR PROTEIN 3, MITOCHONDRIAL"/>
    <property type="match status" value="1"/>
</dbReference>
<dbReference type="PANTHER" id="PTHR10884">
    <property type="entry name" value="NADH DEHYDROGENASE UBIQUINONE IRON-SULFUR PROTEIN 3"/>
    <property type="match status" value="1"/>
</dbReference>
<dbReference type="Pfam" id="PF00329">
    <property type="entry name" value="Complex1_30kDa"/>
    <property type="match status" value="1"/>
</dbReference>
<dbReference type="SUPFAM" id="SSF143243">
    <property type="entry name" value="Nqo5-like"/>
    <property type="match status" value="1"/>
</dbReference>
<dbReference type="PROSITE" id="PS00542">
    <property type="entry name" value="COMPLEX1_30K"/>
    <property type="match status" value="1"/>
</dbReference>
<protein>
    <recommendedName>
        <fullName evidence="1">NADH-quinone oxidoreductase subunit C</fullName>
        <ecNumber evidence="1">7.1.1.-</ecNumber>
    </recommendedName>
    <alternativeName>
        <fullName evidence="1">NADH dehydrogenase I subunit C</fullName>
    </alternativeName>
    <alternativeName>
        <fullName evidence="1">NDH-1 subunit C</fullName>
    </alternativeName>
</protein>
<accession>Q72GD0</accession>
<sequence length="207" mass="23859">MRLERVLEEARAKGYPIEDNGLGNLWVVLPRERFKEEMAHYKAMGFNFLADIVGLDYLTYPDPRPERFAVVYELVSLPGWKDGDGSRFFVRVYVPEEDPRLPTVTDLWGSANFLEREVYDLFGIVFEGHPDLRKILTPEDLEGHPLRKDYPLGETPTLFREGRYIIPAEFRAALTGKDPGLTFYKGGSRKGYRSLWADLKKAREVKG</sequence>
<name>NUOC_THET2</name>
<proteinExistence type="inferred from homology"/>
<keyword id="KW-0997">Cell inner membrane</keyword>
<keyword id="KW-1003">Cell membrane</keyword>
<keyword id="KW-0472">Membrane</keyword>
<keyword id="KW-0520">NAD</keyword>
<keyword id="KW-0874">Quinone</keyword>
<keyword id="KW-1278">Translocase</keyword>
<keyword id="KW-0813">Transport</keyword>
<gene>
    <name evidence="1" type="primary">nuoC</name>
    <name type="ordered locus">TT_C1918</name>
</gene>
<organism>
    <name type="scientific">Thermus thermophilus (strain ATCC BAA-163 / DSM 7039 / HB27)</name>
    <dbReference type="NCBI Taxonomy" id="262724"/>
    <lineage>
        <taxon>Bacteria</taxon>
        <taxon>Thermotogati</taxon>
        <taxon>Deinococcota</taxon>
        <taxon>Deinococci</taxon>
        <taxon>Thermales</taxon>
        <taxon>Thermaceae</taxon>
        <taxon>Thermus</taxon>
    </lineage>
</organism>